<protein>
    <recommendedName>
        <fullName evidence="1">2-C-methyl-D-erythritol 2,4-cyclodiphosphate synthase</fullName>
        <shortName evidence="1">MECDP-synthase</shortName>
        <shortName evidence="1">MECPP-synthase</shortName>
        <shortName evidence="1">MECPS</shortName>
        <ecNumber evidence="1">4.6.1.12</ecNumber>
    </recommendedName>
</protein>
<evidence type="ECO:0000255" key="1">
    <source>
        <dbReference type="HAMAP-Rule" id="MF_00107"/>
    </source>
</evidence>
<reference key="1">
    <citation type="submission" date="2008-02" db="EMBL/GenBank/DDBJ databases">
        <title>Complete sequence of chromosome 1 of Burkholderia cenocepacia MC0-3.</title>
        <authorList>
            <person name="Copeland A."/>
            <person name="Lucas S."/>
            <person name="Lapidus A."/>
            <person name="Barry K."/>
            <person name="Bruce D."/>
            <person name="Goodwin L."/>
            <person name="Glavina del Rio T."/>
            <person name="Dalin E."/>
            <person name="Tice H."/>
            <person name="Pitluck S."/>
            <person name="Chain P."/>
            <person name="Malfatti S."/>
            <person name="Shin M."/>
            <person name="Vergez L."/>
            <person name="Schmutz J."/>
            <person name="Larimer F."/>
            <person name="Land M."/>
            <person name="Hauser L."/>
            <person name="Kyrpides N."/>
            <person name="Mikhailova N."/>
            <person name="Tiedje J."/>
            <person name="Richardson P."/>
        </authorList>
    </citation>
    <scope>NUCLEOTIDE SEQUENCE [LARGE SCALE GENOMIC DNA]</scope>
    <source>
        <strain>MC0-3</strain>
    </source>
</reference>
<accession>B1JTX0</accession>
<gene>
    <name evidence="1" type="primary">ispF</name>
    <name type="ordered locus">Bcenmc03_1966</name>
</gene>
<keyword id="KW-0414">Isoprene biosynthesis</keyword>
<keyword id="KW-0456">Lyase</keyword>
<keyword id="KW-0479">Metal-binding</keyword>
<comment type="function">
    <text evidence="1">Involved in the biosynthesis of isopentenyl diphosphate (IPP) and dimethylallyl diphosphate (DMAPP), two major building blocks of isoprenoid compounds. Catalyzes the conversion of 4-diphosphocytidyl-2-C-methyl-D-erythritol 2-phosphate (CDP-ME2P) to 2-C-methyl-D-erythritol 2,4-cyclodiphosphate (ME-CPP) with a corresponding release of cytidine 5-monophosphate (CMP).</text>
</comment>
<comment type="catalytic activity">
    <reaction evidence="1">
        <text>4-CDP-2-C-methyl-D-erythritol 2-phosphate = 2-C-methyl-D-erythritol 2,4-cyclic diphosphate + CMP</text>
        <dbReference type="Rhea" id="RHEA:23864"/>
        <dbReference type="ChEBI" id="CHEBI:57919"/>
        <dbReference type="ChEBI" id="CHEBI:58483"/>
        <dbReference type="ChEBI" id="CHEBI:60377"/>
        <dbReference type="EC" id="4.6.1.12"/>
    </reaction>
</comment>
<comment type="cofactor">
    <cofactor evidence="1">
        <name>a divalent metal cation</name>
        <dbReference type="ChEBI" id="CHEBI:60240"/>
    </cofactor>
    <text evidence="1">Binds 1 divalent metal cation per subunit.</text>
</comment>
<comment type="pathway">
    <text evidence="1">Isoprenoid biosynthesis; isopentenyl diphosphate biosynthesis via DXP pathway; isopentenyl diphosphate from 1-deoxy-D-xylulose 5-phosphate: step 4/6.</text>
</comment>
<comment type="subunit">
    <text evidence="1">Homotrimer.</text>
</comment>
<comment type="similarity">
    <text evidence="1">Belongs to the IspF family.</text>
</comment>
<name>ISPF_BURO0</name>
<proteinExistence type="inferred from homology"/>
<dbReference type="EC" id="4.6.1.12" evidence="1"/>
<dbReference type="EMBL" id="CP000958">
    <property type="protein sequence ID" value="ACA91127.1"/>
    <property type="molecule type" value="Genomic_DNA"/>
</dbReference>
<dbReference type="RefSeq" id="WP_006488015.1">
    <property type="nucleotide sequence ID" value="NC_010508.1"/>
</dbReference>
<dbReference type="SMR" id="B1JTX0"/>
<dbReference type="GeneID" id="83048743"/>
<dbReference type="KEGG" id="bcm:Bcenmc03_1966"/>
<dbReference type="HOGENOM" id="CLU_084630_2_0_4"/>
<dbReference type="UniPathway" id="UPA00056">
    <property type="reaction ID" value="UER00095"/>
</dbReference>
<dbReference type="Proteomes" id="UP000002169">
    <property type="component" value="Chromosome 1"/>
</dbReference>
<dbReference type="GO" id="GO:0008685">
    <property type="term" value="F:2-C-methyl-D-erythritol 2,4-cyclodiphosphate synthase activity"/>
    <property type="evidence" value="ECO:0007669"/>
    <property type="project" value="UniProtKB-UniRule"/>
</dbReference>
<dbReference type="GO" id="GO:0046872">
    <property type="term" value="F:metal ion binding"/>
    <property type="evidence" value="ECO:0007669"/>
    <property type="project" value="UniProtKB-KW"/>
</dbReference>
<dbReference type="GO" id="GO:0019288">
    <property type="term" value="P:isopentenyl diphosphate biosynthetic process, methylerythritol 4-phosphate pathway"/>
    <property type="evidence" value="ECO:0007669"/>
    <property type="project" value="UniProtKB-UniRule"/>
</dbReference>
<dbReference type="GO" id="GO:0016114">
    <property type="term" value="P:terpenoid biosynthetic process"/>
    <property type="evidence" value="ECO:0007669"/>
    <property type="project" value="InterPro"/>
</dbReference>
<dbReference type="CDD" id="cd00554">
    <property type="entry name" value="MECDP_synthase"/>
    <property type="match status" value="1"/>
</dbReference>
<dbReference type="FunFam" id="3.30.1330.50:FF:000001">
    <property type="entry name" value="2-C-methyl-D-erythritol 2,4-cyclodiphosphate synthase"/>
    <property type="match status" value="1"/>
</dbReference>
<dbReference type="Gene3D" id="3.30.1330.50">
    <property type="entry name" value="2-C-methyl-D-erythritol 2,4-cyclodiphosphate synthase"/>
    <property type="match status" value="1"/>
</dbReference>
<dbReference type="HAMAP" id="MF_00107">
    <property type="entry name" value="IspF"/>
    <property type="match status" value="1"/>
</dbReference>
<dbReference type="InterPro" id="IPR003526">
    <property type="entry name" value="MECDP_synthase"/>
</dbReference>
<dbReference type="InterPro" id="IPR020555">
    <property type="entry name" value="MECDP_synthase_CS"/>
</dbReference>
<dbReference type="InterPro" id="IPR036571">
    <property type="entry name" value="MECDP_synthase_sf"/>
</dbReference>
<dbReference type="NCBIfam" id="TIGR00151">
    <property type="entry name" value="ispF"/>
    <property type="match status" value="1"/>
</dbReference>
<dbReference type="PANTHER" id="PTHR43181">
    <property type="entry name" value="2-C-METHYL-D-ERYTHRITOL 2,4-CYCLODIPHOSPHATE SYNTHASE, CHLOROPLASTIC"/>
    <property type="match status" value="1"/>
</dbReference>
<dbReference type="PANTHER" id="PTHR43181:SF1">
    <property type="entry name" value="2-C-METHYL-D-ERYTHRITOL 2,4-CYCLODIPHOSPHATE SYNTHASE, CHLOROPLASTIC"/>
    <property type="match status" value="1"/>
</dbReference>
<dbReference type="Pfam" id="PF02542">
    <property type="entry name" value="YgbB"/>
    <property type="match status" value="1"/>
</dbReference>
<dbReference type="SUPFAM" id="SSF69765">
    <property type="entry name" value="IpsF-like"/>
    <property type="match status" value="1"/>
</dbReference>
<dbReference type="PROSITE" id="PS01350">
    <property type="entry name" value="ISPF"/>
    <property type="match status" value="1"/>
</dbReference>
<sequence length="161" mass="16923">MDFRIGQGYDVHQLVEGRPLIIGGVTIPYERGLLGHSDADVLLHAITDALFGAAALGDIGRHFSDTDAAFKGADSRVLLRACAERVKAAGFTIQNVDSTVIAQAPKLAPHIDGMRANIAADLGLPLERVNVKAKTNEKLGYLGRGEGIEAQAAALLVKQGG</sequence>
<organism>
    <name type="scientific">Burkholderia orbicola (strain MC0-3)</name>
    <dbReference type="NCBI Taxonomy" id="406425"/>
    <lineage>
        <taxon>Bacteria</taxon>
        <taxon>Pseudomonadati</taxon>
        <taxon>Pseudomonadota</taxon>
        <taxon>Betaproteobacteria</taxon>
        <taxon>Burkholderiales</taxon>
        <taxon>Burkholderiaceae</taxon>
        <taxon>Burkholderia</taxon>
        <taxon>Burkholderia cepacia complex</taxon>
        <taxon>Burkholderia orbicola</taxon>
    </lineage>
</organism>
<feature type="chain" id="PRO_1000094242" description="2-C-methyl-D-erythritol 2,4-cyclodiphosphate synthase">
    <location>
        <begin position="1"/>
        <end position="161"/>
    </location>
</feature>
<feature type="binding site" evidence="1">
    <location>
        <begin position="10"/>
        <end position="12"/>
    </location>
    <ligand>
        <name>4-CDP-2-C-methyl-D-erythritol 2-phosphate</name>
        <dbReference type="ChEBI" id="CHEBI:57919"/>
    </ligand>
</feature>
<feature type="binding site" evidence="1">
    <location>
        <position position="10"/>
    </location>
    <ligand>
        <name>a divalent metal cation</name>
        <dbReference type="ChEBI" id="CHEBI:60240"/>
    </ligand>
</feature>
<feature type="binding site" evidence="1">
    <location>
        <position position="12"/>
    </location>
    <ligand>
        <name>a divalent metal cation</name>
        <dbReference type="ChEBI" id="CHEBI:60240"/>
    </ligand>
</feature>
<feature type="binding site" evidence="1">
    <location>
        <begin position="36"/>
        <end position="37"/>
    </location>
    <ligand>
        <name>4-CDP-2-C-methyl-D-erythritol 2-phosphate</name>
        <dbReference type="ChEBI" id="CHEBI:57919"/>
    </ligand>
</feature>
<feature type="binding site" evidence="1">
    <location>
        <position position="44"/>
    </location>
    <ligand>
        <name>a divalent metal cation</name>
        <dbReference type="ChEBI" id="CHEBI:60240"/>
    </ligand>
</feature>
<feature type="binding site" evidence="1">
    <location>
        <begin position="58"/>
        <end position="60"/>
    </location>
    <ligand>
        <name>4-CDP-2-C-methyl-D-erythritol 2-phosphate</name>
        <dbReference type="ChEBI" id="CHEBI:57919"/>
    </ligand>
</feature>
<feature type="binding site" evidence="1">
    <location>
        <begin position="63"/>
        <end position="67"/>
    </location>
    <ligand>
        <name>4-CDP-2-C-methyl-D-erythritol 2-phosphate</name>
        <dbReference type="ChEBI" id="CHEBI:57919"/>
    </ligand>
</feature>
<feature type="binding site" evidence="1">
    <location>
        <position position="144"/>
    </location>
    <ligand>
        <name>4-CDP-2-C-methyl-D-erythritol 2-phosphate</name>
        <dbReference type="ChEBI" id="CHEBI:57919"/>
    </ligand>
</feature>
<feature type="site" description="Transition state stabilizer" evidence="1">
    <location>
        <position position="36"/>
    </location>
</feature>
<feature type="site" description="Transition state stabilizer" evidence="1">
    <location>
        <position position="135"/>
    </location>
</feature>